<reference key="1">
    <citation type="journal article" date="2001" name="Nature">
        <title>Genome sequence of Yersinia pestis, the causative agent of plague.</title>
        <authorList>
            <person name="Parkhill J."/>
            <person name="Wren B.W."/>
            <person name="Thomson N.R."/>
            <person name="Titball R.W."/>
            <person name="Holden M.T.G."/>
            <person name="Prentice M.B."/>
            <person name="Sebaihia M."/>
            <person name="James K.D."/>
            <person name="Churcher C.M."/>
            <person name="Mungall K.L."/>
            <person name="Baker S."/>
            <person name="Basham D."/>
            <person name="Bentley S.D."/>
            <person name="Brooks K."/>
            <person name="Cerdeno-Tarraga A.-M."/>
            <person name="Chillingworth T."/>
            <person name="Cronin A."/>
            <person name="Davies R.M."/>
            <person name="Davis P."/>
            <person name="Dougan G."/>
            <person name="Feltwell T."/>
            <person name="Hamlin N."/>
            <person name="Holroyd S."/>
            <person name="Jagels K."/>
            <person name="Karlyshev A.V."/>
            <person name="Leather S."/>
            <person name="Moule S."/>
            <person name="Oyston P.C.F."/>
            <person name="Quail M.A."/>
            <person name="Rutherford K.M."/>
            <person name="Simmonds M."/>
            <person name="Skelton J."/>
            <person name="Stevens K."/>
            <person name="Whitehead S."/>
            <person name="Barrell B.G."/>
        </authorList>
    </citation>
    <scope>NUCLEOTIDE SEQUENCE [LARGE SCALE GENOMIC DNA]</scope>
    <source>
        <strain>CO-92 / Biovar Orientalis</strain>
    </source>
</reference>
<reference key="2">
    <citation type="journal article" date="2002" name="J. Bacteriol.">
        <title>Genome sequence of Yersinia pestis KIM.</title>
        <authorList>
            <person name="Deng W."/>
            <person name="Burland V."/>
            <person name="Plunkett G. III"/>
            <person name="Boutin A."/>
            <person name="Mayhew G.F."/>
            <person name="Liss P."/>
            <person name="Perna N.T."/>
            <person name="Rose D.J."/>
            <person name="Mau B."/>
            <person name="Zhou S."/>
            <person name="Schwartz D.C."/>
            <person name="Fetherston J.D."/>
            <person name="Lindler L.E."/>
            <person name="Brubaker R.R."/>
            <person name="Plano G.V."/>
            <person name="Straley S.C."/>
            <person name="McDonough K.A."/>
            <person name="Nilles M.L."/>
            <person name="Matson J.S."/>
            <person name="Blattner F.R."/>
            <person name="Perry R.D."/>
        </authorList>
    </citation>
    <scope>NUCLEOTIDE SEQUENCE [LARGE SCALE GENOMIC DNA]</scope>
    <source>
        <strain>KIM10+ / Biovar Mediaevalis</strain>
    </source>
</reference>
<reference key="3">
    <citation type="journal article" date="2004" name="DNA Res.">
        <title>Complete genome sequence of Yersinia pestis strain 91001, an isolate avirulent to humans.</title>
        <authorList>
            <person name="Song Y."/>
            <person name="Tong Z."/>
            <person name="Wang J."/>
            <person name="Wang L."/>
            <person name="Guo Z."/>
            <person name="Han Y."/>
            <person name="Zhang J."/>
            <person name="Pei D."/>
            <person name="Zhou D."/>
            <person name="Qin H."/>
            <person name="Pang X."/>
            <person name="Han Y."/>
            <person name="Zhai J."/>
            <person name="Li M."/>
            <person name="Cui B."/>
            <person name="Qi Z."/>
            <person name="Jin L."/>
            <person name="Dai R."/>
            <person name="Chen F."/>
            <person name="Li S."/>
            <person name="Ye C."/>
            <person name="Du Z."/>
            <person name="Lin W."/>
            <person name="Wang J."/>
            <person name="Yu J."/>
            <person name="Yang H."/>
            <person name="Wang J."/>
            <person name="Huang P."/>
            <person name="Yang R."/>
        </authorList>
    </citation>
    <scope>NUCLEOTIDE SEQUENCE [LARGE SCALE GENOMIC DNA]</scope>
    <source>
        <strain>91001 / Biovar Mediaevalis</strain>
    </source>
</reference>
<proteinExistence type="inferred from homology"/>
<name>ACPH_YERPE</name>
<gene>
    <name evidence="1" type="primary">acpH</name>
    <name type="ordered locus">YPO3193</name>
    <name type="ordered locus">y0989</name>
    <name type="ordered locus">YP_0738</name>
</gene>
<comment type="function">
    <text evidence="1">Converts holo-ACP to apo-ACP by hydrolytic cleavage of the phosphopantetheine prosthetic group from ACP.</text>
</comment>
<comment type="catalytic activity">
    <reaction evidence="1">
        <text>holo-[ACP] + H2O = apo-[ACP] + (R)-4'-phosphopantetheine + H(+)</text>
        <dbReference type="Rhea" id="RHEA:20537"/>
        <dbReference type="Rhea" id="RHEA-COMP:9685"/>
        <dbReference type="Rhea" id="RHEA-COMP:9690"/>
        <dbReference type="ChEBI" id="CHEBI:15377"/>
        <dbReference type="ChEBI" id="CHEBI:15378"/>
        <dbReference type="ChEBI" id="CHEBI:29999"/>
        <dbReference type="ChEBI" id="CHEBI:61723"/>
        <dbReference type="ChEBI" id="CHEBI:64479"/>
        <dbReference type="EC" id="3.1.4.14"/>
    </reaction>
</comment>
<comment type="similarity">
    <text evidence="1">Belongs to the AcpH family.</text>
</comment>
<comment type="sequence caution" evidence="2">
    <conflict type="erroneous initiation">
        <sequence resource="EMBL-CDS" id="AAM84570"/>
    </conflict>
</comment>
<comment type="sequence caution" evidence="2">
    <conflict type="erroneous initiation">
        <sequence resource="EMBL-CDS" id="AAS61003"/>
    </conflict>
</comment>
<organism>
    <name type="scientific">Yersinia pestis</name>
    <dbReference type="NCBI Taxonomy" id="632"/>
    <lineage>
        <taxon>Bacteria</taxon>
        <taxon>Pseudomonadati</taxon>
        <taxon>Pseudomonadota</taxon>
        <taxon>Gammaproteobacteria</taxon>
        <taxon>Enterobacterales</taxon>
        <taxon>Yersiniaceae</taxon>
        <taxon>Yersinia</taxon>
    </lineage>
</organism>
<dbReference type="EC" id="3.1.4.14" evidence="1"/>
<dbReference type="EMBL" id="AL590842">
    <property type="protein sequence ID" value="CAL21788.1"/>
    <property type="molecule type" value="Genomic_DNA"/>
</dbReference>
<dbReference type="EMBL" id="AE009952">
    <property type="protein sequence ID" value="AAM84570.1"/>
    <property type="status" value="ALT_INIT"/>
    <property type="molecule type" value="Genomic_DNA"/>
</dbReference>
<dbReference type="EMBL" id="AE017042">
    <property type="protein sequence ID" value="AAS61003.1"/>
    <property type="status" value="ALT_INIT"/>
    <property type="molecule type" value="Genomic_DNA"/>
</dbReference>
<dbReference type="PIR" id="AI0387">
    <property type="entry name" value="AI0387"/>
</dbReference>
<dbReference type="RefSeq" id="WP_002216927.1">
    <property type="nucleotide sequence ID" value="NZ_WUCM01000079.1"/>
</dbReference>
<dbReference type="RefSeq" id="YP_002348098.1">
    <property type="nucleotide sequence ID" value="NC_003143.1"/>
</dbReference>
<dbReference type="STRING" id="214092.YPO3193"/>
<dbReference type="PaxDb" id="214092-YPO3193"/>
<dbReference type="DNASU" id="1145936"/>
<dbReference type="EnsemblBacteria" id="AAS61003">
    <property type="protein sequence ID" value="AAS61003"/>
    <property type="gene ID" value="YP_0738"/>
</dbReference>
<dbReference type="KEGG" id="ype:YPO3193"/>
<dbReference type="KEGG" id="ypj:CH55_1770"/>
<dbReference type="KEGG" id="ypk:y0989"/>
<dbReference type="KEGG" id="ypl:CH46_1909"/>
<dbReference type="KEGG" id="ypm:YP_0738"/>
<dbReference type="KEGG" id="ypv:BZ15_336"/>
<dbReference type="KEGG" id="ypw:CH59_2867"/>
<dbReference type="PATRIC" id="fig|1028802.3.peg.403"/>
<dbReference type="eggNOG" id="COG3124">
    <property type="taxonomic scope" value="Bacteria"/>
</dbReference>
<dbReference type="HOGENOM" id="CLU_099370_1_0_6"/>
<dbReference type="OrthoDB" id="8442777at2"/>
<dbReference type="Proteomes" id="UP000000815">
    <property type="component" value="Chromosome"/>
</dbReference>
<dbReference type="Proteomes" id="UP000001019">
    <property type="component" value="Chromosome"/>
</dbReference>
<dbReference type="Proteomes" id="UP000002490">
    <property type="component" value="Chromosome"/>
</dbReference>
<dbReference type="GO" id="GO:0008770">
    <property type="term" value="F:[acyl-carrier-protein] phosphodiesterase activity"/>
    <property type="evidence" value="ECO:0000318"/>
    <property type="project" value="GO_Central"/>
</dbReference>
<dbReference type="GO" id="GO:0006633">
    <property type="term" value="P:fatty acid biosynthetic process"/>
    <property type="evidence" value="ECO:0000318"/>
    <property type="project" value="GO_Central"/>
</dbReference>
<dbReference type="HAMAP" id="MF_01950">
    <property type="entry name" value="AcpH"/>
    <property type="match status" value="1"/>
</dbReference>
<dbReference type="InterPro" id="IPR007431">
    <property type="entry name" value="ACP_PD"/>
</dbReference>
<dbReference type="InterPro" id="IPR023491">
    <property type="entry name" value="ACP_phosphodiesterase_gpbac"/>
</dbReference>
<dbReference type="PANTHER" id="PTHR38764">
    <property type="entry name" value="ACYL CARRIER PROTEIN PHOSPHODIESTERASE"/>
    <property type="match status" value="1"/>
</dbReference>
<dbReference type="PANTHER" id="PTHR38764:SF1">
    <property type="entry name" value="ACYL CARRIER PROTEIN PHOSPHODIESTERASE"/>
    <property type="match status" value="1"/>
</dbReference>
<dbReference type="Pfam" id="PF04336">
    <property type="entry name" value="ACP_PD"/>
    <property type="match status" value="1"/>
</dbReference>
<dbReference type="PIRSF" id="PIRSF011489">
    <property type="entry name" value="DUF479"/>
    <property type="match status" value="1"/>
</dbReference>
<keyword id="KW-0275">Fatty acid biosynthesis</keyword>
<keyword id="KW-0276">Fatty acid metabolism</keyword>
<keyword id="KW-0378">Hydrolase</keyword>
<keyword id="KW-0444">Lipid biosynthesis</keyword>
<keyword id="KW-0443">Lipid metabolism</keyword>
<keyword id="KW-1185">Reference proteome</keyword>
<evidence type="ECO:0000255" key="1">
    <source>
        <dbReference type="HAMAP-Rule" id="MF_01950"/>
    </source>
</evidence>
<evidence type="ECO:0000305" key="2"/>
<sequence>MNFLAHLHLAALADSSLLGNLLADFVRGNPQGEYPPEIVAGIMMHRRVDVMTDTLPLVKEARTYFSADYRRVSPITLDVLWDHFLARHWDQLVPNCTLPDFLQHAQSQILPHLPHTPARFQSLNAYLWSERWLERYAELPFIADVLQGMANRRPKLAALAGSFYAIEQHYQPLEDLFLTFYPTMMRQAQHKQI</sequence>
<accession>Q8ZC31</accession>
<accession>Q0WC90</accession>
<accession>Q74WU4</accession>
<accession>Q8D165</accession>
<feature type="chain" id="PRO_0000226278" description="Acyl carrier protein phosphodiesterase">
    <location>
        <begin position="1"/>
        <end position="193"/>
    </location>
</feature>
<protein>
    <recommendedName>
        <fullName evidence="1">Acyl carrier protein phosphodiesterase</fullName>
        <shortName evidence="1">ACP phosphodiesterase</shortName>
        <ecNumber evidence="1">3.1.4.14</ecNumber>
    </recommendedName>
</protein>